<dbReference type="EC" id="2.3.1.234" evidence="1"/>
<dbReference type="EMBL" id="BX640416">
    <property type="protein sequence ID" value="CAE42003.1"/>
    <property type="molecule type" value="Genomic_DNA"/>
</dbReference>
<dbReference type="RefSeq" id="NP_880431.1">
    <property type="nucleotide sequence ID" value="NC_002929.2"/>
</dbReference>
<dbReference type="RefSeq" id="WP_010930524.1">
    <property type="nucleotide sequence ID" value="NZ_CP039022.1"/>
</dbReference>
<dbReference type="SMR" id="Q7VXN4"/>
<dbReference type="STRING" id="257313.BP1716"/>
<dbReference type="PaxDb" id="257313-BP1716"/>
<dbReference type="GeneID" id="69602107"/>
<dbReference type="KEGG" id="bpe:BP1716"/>
<dbReference type="PATRIC" id="fig|257313.5.peg.1841"/>
<dbReference type="eggNOG" id="COG0533">
    <property type="taxonomic scope" value="Bacteria"/>
</dbReference>
<dbReference type="HOGENOM" id="CLU_023208_0_0_4"/>
<dbReference type="Proteomes" id="UP000002676">
    <property type="component" value="Chromosome"/>
</dbReference>
<dbReference type="GO" id="GO:0005737">
    <property type="term" value="C:cytoplasm"/>
    <property type="evidence" value="ECO:0007669"/>
    <property type="project" value="UniProtKB-SubCell"/>
</dbReference>
<dbReference type="GO" id="GO:0005506">
    <property type="term" value="F:iron ion binding"/>
    <property type="evidence" value="ECO:0007669"/>
    <property type="project" value="UniProtKB-UniRule"/>
</dbReference>
<dbReference type="GO" id="GO:0061711">
    <property type="term" value="F:N(6)-L-threonylcarbamoyladenine synthase activity"/>
    <property type="evidence" value="ECO:0007669"/>
    <property type="project" value="UniProtKB-EC"/>
</dbReference>
<dbReference type="GO" id="GO:0002949">
    <property type="term" value="P:tRNA threonylcarbamoyladenosine modification"/>
    <property type="evidence" value="ECO:0007669"/>
    <property type="project" value="UniProtKB-UniRule"/>
</dbReference>
<dbReference type="CDD" id="cd24133">
    <property type="entry name" value="ASKHA_NBD_TsaD_bac"/>
    <property type="match status" value="1"/>
</dbReference>
<dbReference type="FunFam" id="3.30.420.40:FF:000012">
    <property type="entry name" value="tRNA N6-adenosine threonylcarbamoyltransferase"/>
    <property type="match status" value="1"/>
</dbReference>
<dbReference type="FunFam" id="3.30.420.40:FF:000040">
    <property type="entry name" value="tRNA N6-adenosine threonylcarbamoyltransferase"/>
    <property type="match status" value="1"/>
</dbReference>
<dbReference type="Gene3D" id="3.30.420.40">
    <property type="match status" value="2"/>
</dbReference>
<dbReference type="HAMAP" id="MF_01445">
    <property type="entry name" value="TsaD"/>
    <property type="match status" value="1"/>
</dbReference>
<dbReference type="InterPro" id="IPR043129">
    <property type="entry name" value="ATPase_NBD"/>
</dbReference>
<dbReference type="InterPro" id="IPR000905">
    <property type="entry name" value="Gcp-like_dom"/>
</dbReference>
<dbReference type="InterPro" id="IPR017861">
    <property type="entry name" value="KAE1/TsaD"/>
</dbReference>
<dbReference type="InterPro" id="IPR022450">
    <property type="entry name" value="TsaD"/>
</dbReference>
<dbReference type="NCBIfam" id="TIGR00329">
    <property type="entry name" value="gcp_kae1"/>
    <property type="match status" value="1"/>
</dbReference>
<dbReference type="NCBIfam" id="TIGR03723">
    <property type="entry name" value="T6A_TsaD_YgjD"/>
    <property type="match status" value="1"/>
</dbReference>
<dbReference type="PANTHER" id="PTHR11735">
    <property type="entry name" value="TRNA N6-ADENOSINE THREONYLCARBAMOYLTRANSFERASE"/>
    <property type="match status" value="1"/>
</dbReference>
<dbReference type="PANTHER" id="PTHR11735:SF6">
    <property type="entry name" value="TRNA N6-ADENOSINE THREONYLCARBAMOYLTRANSFERASE, MITOCHONDRIAL"/>
    <property type="match status" value="1"/>
</dbReference>
<dbReference type="Pfam" id="PF00814">
    <property type="entry name" value="TsaD"/>
    <property type="match status" value="1"/>
</dbReference>
<dbReference type="PRINTS" id="PR00789">
    <property type="entry name" value="OSIALOPTASE"/>
</dbReference>
<dbReference type="SUPFAM" id="SSF53067">
    <property type="entry name" value="Actin-like ATPase domain"/>
    <property type="match status" value="2"/>
</dbReference>
<organism>
    <name type="scientific">Bordetella pertussis (strain Tohama I / ATCC BAA-589 / NCTC 13251)</name>
    <dbReference type="NCBI Taxonomy" id="257313"/>
    <lineage>
        <taxon>Bacteria</taxon>
        <taxon>Pseudomonadati</taxon>
        <taxon>Pseudomonadota</taxon>
        <taxon>Betaproteobacteria</taxon>
        <taxon>Burkholderiales</taxon>
        <taxon>Alcaligenaceae</taxon>
        <taxon>Bordetella</taxon>
    </lineage>
</organism>
<evidence type="ECO:0000255" key="1">
    <source>
        <dbReference type="HAMAP-Rule" id="MF_01445"/>
    </source>
</evidence>
<comment type="function">
    <text evidence="1">Required for the formation of a threonylcarbamoyl group on adenosine at position 37 (t(6)A37) in tRNAs that read codons beginning with adenine. Is involved in the transfer of the threonylcarbamoyl moiety of threonylcarbamoyl-AMP (TC-AMP) to the N6 group of A37, together with TsaE and TsaB. TsaD likely plays a direct catalytic role in this reaction.</text>
</comment>
<comment type="catalytic activity">
    <reaction evidence="1">
        <text>L-threonylcarbamoyladenylate + adenosine(37) in tRNA = N(6)-L-threonylcarbamoyladenosine(37) in tRNA + AMP + H(+)</text>
        <dbReference type="Rhea" id="RHEA:37059"/>
        <dbReference type="Rhea" id="RHEA-COMP:10162"/>
        <dbReference type="Rhea" id="RHEA-COMP:10163"/>
        <dbReference type="ChEBI" id="CHEBI:15378"/>
        <dbReference type="ChEBI" id="CHEBI:73682"/>
        <dbReference type="ChEBI" id="CHEBI:74411"/>
        <dbReference type="ChEBI" id="CHEBI:74418"/>
        <dbReference type="ChEBI" id="CHEBI:456215"/>
        <dbReference type="EC" id="2.3.1.234"/>
    </reaction>
</comment>
<comment type="cofactor">
    <cofactor evidence="1">
        <name>Fe(2+)</name>
        <dbReference type="ChEBI" id="CHEBI:29033"/>
    </cofactor>
    <text evidence="1">Binds 1 Fe(2+) ion per subunit.</text>
</comment>
<comment type="subcellular location">
    <subcellularLocation>
        <location evidence="1">Cytoplasm</location>
    </subcellularLocation>
</comment>
<comment type="similarity">
    <text evidence="1">Belongs to the KAE1 / TsaD family.</text>
</comment>
<protein>
    <recommendedName>
        <fullName evidence="1">tRNA N6-adenosine threonylcarbamoyltransferase</fullName>
        <ecNumber evidence="1">2.3.1.234</ecNumber>
    </recommendedName>
    <alternativeName>
        <fullName evidence="1">N6-L-threonylcarbamoyladenine synthase</fullName>
        <shortName evidence="1">t(6)A synthase</shortName>
    </alternativeName>
    <alternativeName>
        <fullName evidence="1">t(6)A37 threonylcarbamoyladenosine biosynthesis protein TsaD</fullName>
    </alternativeName>
    <alternativeName>
        <fullName evidence="1">tRNA threonylcarbamoyladenosine biosynthesis protein TsaD</fullName>
    </alternativeName>
</protein>
<reference key="1">
    <citation type="journal article" date="2003" name="Nat. Genet.">
        <title>Comparative analysis of the genome sequences of Bordetella pertussis, Bordetella parapertussis and Bordetella bronchiseptica.</title>
        <authorList>
            <person name="Parkhill J."/>
            <person name="Sebaihia M."/>
            <person name="Preston A."/>
            <person name="Murphy L.D."/>
            <person name="Thomson N.R."/>
            <person name="Harris D.E."/>
            <person name="Holden M.T.G."/>
            <person name="Churcher C.M."/>
            <person name="Bentley S.D."/>
            <person name="Mungall K.L."/>
            <person name="Cerdeno-Tarraga A.-M."/>
            <person name="Temple L."/>
            <person name="James K.D."/>
            <person name="Harris B."/>
            <person name="Quail M.A."/>
            <person name="Achtman M."/>
            <person name="Atkin R."/>
            <person name="Baker S."/>
            <person name="Basham D."/>
            <person name="Bason N."/>
            <person name="Cherevach I."/>
            <person name="Chillingworth T."/>
            <person name="Collins M."/>
            <person name="Cronin A."/>
            <person name="Davis P."/>
            <person name="Doggett J."/>
            <person name="Feltwell T."/>
            <person name="Goble A."/>
            <person name="Hamlin N."/>
            <person name="Hauser H."/>
            <person name="Holroyd S."/>
            <person name="Jagels K."/>
            <person name="Leather S."/>
            <person name="Moule S."/>
            <person name="Norberczak H."/>
            <person name="O'Neil S."/>
            <person name="Ormond D."/>
            <person name="Price C."/>
            <person name="Rabbinowitsch E."/>
            <person name="Rutter S."/>
            <person name="Sanders M."/>
            <person name="Saunders D."/>
            <person name="Seeger K."/>
            <person name="Sharp S."/>
            <person name="Simmonds M."/>
            <person name="Skelton J."/>
            <person name="Squares R."/>
            <person name="Squares S."/>
            <person name="Stevens K."/>
            <person name="Unwin L."/>
            <person name="Whitehead S."/>
            <person name="Barrell B.G."/>
            <person name="Maskell D.J."/>
        </authorList>
    </citation>
    <scope>NUCLEOTIDE SEQUENCE [LARGE SCALE GENOMIC DNA]</scope>
    <source>
        <strain>Tohama I / ATCC BAA-589 / NCTC 13251</strain>
    </source>
</reference>
<sequence length="346" mass="36154">MIILGFESSCDETGVAAVCTERGLLAHALHTQIAMHQEYGGVVPELASRDHIRRVVPLTRQVLAEAGLTLADVGAVAYTAGPGLAGALLVGASVAQALAWSRALPAIGIHHLEGHLLSPLLAEPRPEFPFVALLVSGGHTQLMLVDGVGRYELLGETLDDAAGEAFDKSAKLMGLGYPGGPALARLAEQGDASRYDLPRPMLHSGDLDFSFSGLKTAVLTRVKAATRDGGELGEQDRADLAAATQAAIVEVLAAKAIRALKQTGLRRLVVAGGVGANALLRAHLARALKPLRAEAYFPPLSLCTDNGAMIAFAAAERVKAGLADLREGDHAFTVRPRWDLADIQAG</sequence>
<proteinExistence type="inferred from homology"/>
<accession>Q7VXN4</accession>
<keyword id="KW-0012">Acyltransferase</keyword>
<keyword id="KW-0963">Cytoplasm</keyword>
<keyword id="KW-0408">Iron</keyword>
<keyword id="KW-0479">Metal-binding</keyword>
<keyword id="KW-1185">Reference proteome</keyword>
<keyword id="KW-0808">Transferase</keyword>
<keyword id="KW-0819">tRNA processing</keyword>
<gene>
    <name evidence="1" type="primary">tsaD</name>
    <name type="synonym">gcp</name>
    <name type="ordered locus">BP1716</name>
</gene>
<name>TSAD_BORPE</name>
<feature type="chain" id="PRO_0000303287" description="tRNA N6-adenosine threonylcarbamoyltransferase">
    <location>
        <begin position="1"/>
        <end position="346"/>
    </location>
</feature>
<feature type="binding site" evidence="1">
    <location>
        <position position="111"/>
    </location>
    <ligand>
        <name>Fe cation</name>
        <dbReference type="ChEBI" id="CHEBI:24875"/>
    </ligand>
</feature>
<feature type="binding site" evidence="1">
    <location>
        <position position="115"/>
    </location>
    <ligand>
        <name>Fe cation</name>
        <dbReference type="ChEBI" id="CHEBI:24875"/>
    </ligand>
</feature>
<feature type="binding site" evidence="1">
    <location>
        <begin position="134"/>
        <end position="138"/>
    </location>
    <ligand>
        <name>substrate</name>
    </ligand>
</feature>
<feature type="binding site" evidence="1">
    <location>
        <position position="167"/>
    </location>
    <ligand>
        <name>substrate</name>
    </ligand>
</feature>
<feature type="binding site" evidence="1">
    <location>
        <position position="180"/>
    </location>
    <ligand>
        <name>substrate</name>
    </ligand>
</feature>
<feature type="binding site" evidence="1">
    <location>
        <position position="277"/>
    </location>
    <ligand>
        <name>substrate</name>
    </ligand>
</feature>
<feature type="binding site" evidence="1">
    <location>
        <position position="305"/>
    </location>
    <ligand>
        <name>Fe cation</name>
        <dbReference type="ChEBI" id="CHEBI:24875"/>
    </ligand>
</feature>